<sequence length="264" mass="30273">MRFKELIFPLRVEEEEIVEKFYEEGFFNFAIEEDEKGKRVLKIYLREGEPLPDFLKDWEIVDEKITTPKDWIVELEPFEIVEGVFVDPTEKINRRDAIVIKLSPGVAFGTGLHPTTRMSVFFLKKYLKEGNTVLDVGCGTGILAIAAKKLGASQVVAVDVDEQAVEVAEENVRKNDVDVLVKWSDLLSEVEGTFDIVVSNILAEIHVKLLEDVNRVTHRDSMLILSGIVDKKEDMVKRKASEHGWNVLERKQEREWVTLVMKRS</sequence>
<keyword id="KW-0963">Cytoplasm</keyword>
<keyword id="KW-0489">Methyltransferase</keyword>
<keyword id="KW-0949">S-adenosyl-L-methionine</keyword>
<keyword id="KW-0808">Transferase</keyword>
<proteinExistence type="inferred from homology"/>
<reference key="1">
    <citation type="submission" date="2007-05" db="EMBL/GenBank/DDBJ databases">
        <title>Complete sequence of Thermotoga petrophila RKU-1.</title>
        <authorList>
            <consortium name="US DOE Joint Genome Institute"/>
            <person name="Copeland A."/>
            <person name="Lucas S."/>
            <person name="Lapidus A."/>
            <person name="Barry K."/>
            <person name="Glavina del Rio T."/>
            <person name="Dalin E."/>
            <person name="Tice H."/>
            <person name="Pitluck S."/>
            <person name="Sims D."/>
            <person name="Brettin T."/>
            <person name="Bruce D."/>
            <person name="Detter J.C."/>
            <person name="Han C."/>
            <person name="Tapia R."/>
            <person name="Schmutz J."/>
            <person name="Larimer F."/>
            <person name="Land M."/>
            <person name="Hauser L."/>
            <person name="Kyrpides N."/>
            <person name="Mikhailova N."/>
            <person name="Nelson K."/>
            <person name="Gogarten J.P."/>
            <person name="Noll K."/>
            <person name="Richardson P."/>
        </authorList>
    </citation>
    <scope>NUCLEOTIDE SEQUENCE [LARGE SCALE GENOMIC DNA]</scope>
    <source>
        <strain>ATCC BAA-488 / DSM 13995 / JCM 10881 / RKU-1</strain>
    </source>
</reference>
<evidence type="ECO:0000255" key="1">
    <source>
        <dbReference type="HAMAP-Rule" id="MF_00735"/>
    </source>
</evidence>
<comment type="function">
    <text evidence="1">Methylates ribosomal protein L11.</text>
</comment>
<comment type="catalytic activity">
    <reaction evidence="1">
        <text>L-lysyl-[protein] + 3 S-adenosyl-L-methionine = N(6),N(6),N(6)-trimethyl-L-lysyl-[protein] + 3 S-adenosyl-L-homocysteine + 3 H(+)</text>
        <dbReference type="Rhea" id="RHEA:54192"/>
        <dbReference type="Rhea" id="RHEA-COMP:9752"/>
        <dbReference type="Rhea" id="RHEA-COMP:13826"/>
        <dbReference type="ChEBI" id="CHEBI:15378"/>
        <dbReference type="ChEBI" id="CHEBI:29969"/>
        <dbReference type="ChEBI" id="CHEBI:57856"/>
        <dbReference type="ChEBI" id="CHEBI:59789"/>
        <dbReference type="ChEBI" id="CHEBI:61961"/>
    </reaction>
</comment>
<comment type="subcellular location">
    <subcellularLocation>
        <location evidence="1">Cytoplasm</location>
    </subcellularLocation>
</comment>
<comment type="similarity">
    <text evidence="1">Belongs to the methyltransferase superfamily. PrmA family.</text>
</comment>
<accession>A5IN97</accession>
<organism>
    <name type="scientific">Thermotoga petrophila (strain ATCC BAA-488 / DSM 13995 / JCM 10881 / RKU-1)</name>
    <dbReference type="NCBI Taxonomy" id="390874"/>
    <lineage>
        <taxon>Bacteria</taxon>
        <taxon>Thermotogati</taxon>
        <taxon>Thermotogota</taxon>
        <taxon>Thermotogae</taxon>
        <taxon>Thermotogales</taxon>
        <taxon>Thermotogaceae</taxon>
        <taxon>Thermotoga</taxon>
    </lineage>
</organism>
<protein>
    <recommendedName>
        <fullName evidence="1">Ribosomal protein L11 methyltransferase</fullName>
        <shortName evidence="1">L11 Mtase</shortName>
        <ecNumber evidence="1">2.1.1.-</ecNumber>
    </recommendedName>
</protein>
<dbReference type="EC" id="2.1.1.-" evidence="1"/>
<dbReference type="EMBL" id="CP000702">
    <property type="protein sequence ID" value="ABQ47670.1"/>
    <property type="molecule type" value="Genomic_DNA"/>
</dbReference>
<dbReference type="RefSeq" id="WP_011944078.1">
    <property type="nucleotide sequence ID" value="NC_009486.1"/>
</dbReference>
<dbReference type="SMR" id="A5IN97"/>
<dbReference type="STRING" id="390874.Tpet_1665"/>
<dbReference type="KEGG" id="tpt:Tpet_1665"/>
<dbReference type="eggNOG" id="COG2264">
    <property type="taxonomic scope" value="Bacteria"/>
</dbReference>
<dbReference type="HOGENOM" id="CLU_049382_0_2_0"/>
<dbReference type="Proteomes" id="UP000006558">
    <property type="component" value="Chromosome"/>
</dbReference>
<dbReference type="GO" id="GO:0005737">
    <property type="term" value="C:cytoplasm"/>
    <property type="evidence" value="ECO:0007669"/>
    <property type="project" value="UniProtKB-SubCell"/>
</dbReference>
<dbReference type="GO" id="GO:0016279">
    <property type="term" value="F:protein-lysine N-methyltransferase activity"/>
    <property type="evidence" value="ECO:0007669"/>
    <property type="project" value="RHEA"/>
</dbReference>
<dbReference type="GO" id="GO:0032259">
    <property type="term" value="P:methylation"/>
    <property type="evidence" value="ECO:0007669"/>
    <property type="project" value="UniProtKB-KW"/>
</dbReference>
<dbReference type="CDD" id="cd02440">
    <property type="entry name" value="AdoMet_MTases"/>
    <property type="match status" value="1"/>
</dbReference>
<dbReference type="Gene3D" id="3.40.50.150">
    <property type="entry name" value="Vaccinia Virus protein VP39"/>
    <property type="match status" value="1"/>
</dbReference>
<dbReference type="HAMAP" id="MF_00735">
    <property type="entry name" value="Methyltr_PrmA"/>
    <property type="match status" value="1"/>
</dbReference>
<dbReference type="InterPro" id="IPR050078">
    <property type="entry name" value="Ribosomal_L11_MeTrfase_PrmA"/>
</dbReference>
<dbReference type="InterPro" id="IPR004498">
    <property type="entry name" value="Ribosomal_PrmA_MeTrfase"/>
</dbReference>
<dbReference type="InterPro" id="IPR029063">
    <property type="entry name" value="SAM-dependent_MTases_sf"/>
</dbReference>
<dbReference type="PANTHER" id="PTHR43648">
    <property type="entry name" value="ELECTRON TRANSFER FLAVOPROTEIN BETA SUBUNIT LYSINE METHYLTRANSFERASE"/>
    <property type="match status" value="1"/>
</dbReference>
<dbReference type="PANTHER" id="PTHR43648:SF1">
    <property type="entry name" value="ELECTRON TRANSFER FLAVOPROTEIN BETA SUBUNIT LYSINE METHYLTRANSFERASE"/>
    <property type="match status" value="1"/>
</dbReference>
<dbReference type="Pfam" id="PF06325">
    <property type="entry name" value="PrmA"/>
    <property type="match status" value="1"/>
</dbReference>
<dbReference type="SUPFAM" id="SSF53335">
    <property type="entry name" value="S-adenosyl-L-methionine-dependent methyltransferases"/>
    <property type="match status" value="1"/>
</dbReference>
<gene>
    <name evidence="1" type="primary">prmA</name>
    <name type="ordered locus">Tpet_1665</name>
</gene>
<name>PRMA_THEP1</name>
<feature type="chain" id="PRO_1000046117" description="Ribosomal protein L11 methyltransferase">
    <location>
        <begin position="1"/>
        <end position="264"/>
    </location>
</feature>
<feature type="binding site" evidence="1">
    <location>
        <position position="116"/>
    </location>
    <ligand>
        <name>S-adenosyl-L-methionine</name>
        <dbReference type="ChEBI" id="CHEBI:59789"/>
    </ligand>
</feature>
<feature type="binding site" evidence="1">
    <location>
        <position position="137"/>
    </location>
    <ligand>
        <name>S-adenosyl-L-methionine</name>
        <dbReference type="ChEBI" id="CHEBI:59789"/>
    </ligand>
</feature>
<feature type="binding site" evidence="1">
    <location>
        <position position="159"/>
    </location>
    <ligand>
        <name>S-adenosyl-L-methionine</name>
        <dbReference type="ChEBI" id="CHEBI:59789"/>
    </ligand>
</feature>
<feature type="binding site" evidence="1">
    <location>
        <position position="200"/>
    </location>
    <ligand>
        <name>S-adenosyl-L-methionine</name>
        <dbReference type="ChEBI" id="CHEBI:59789"/>
    </ligand>
</feature>